<accession>A8I4X6</accession>
<protein>
    <recommendedName>
        <fullName evidence="1">Cysteine--tRNA ligase</fullName>
        <ecNumber evidence="1">6.1.1.16</ecNumber>
    </recommendedName>
    <alternativeName>
        <fullName evidence="1">Cysteinyl-tRNA synthetase</fullName>
        <shortName evidence="1">CysRS</shortName>
    </alternativeName>
</protein>
<proteinExistence type="inferred from homology"/>
<dbReference type="EC" id="6.1.1.16" evidence="1"/>
<dbReference type="EMBL" id="AP009384">
    <property type="protein sequence ID" value="BAF87782.1"/>
    <property type="molecule type" value="Genomic_DNA"/>
</dbReference>
<dbReference type="RefSeq" id="WP_012170312.1">
    <property type="nucleotide sequence ID" value="NC_009937.1"/>
</dbReference>
<dbReference type="SMR" id="A8I4X6"/>
<dbReference type="STRING" id="438753.AZC_1784"/>
<dbReference type="KEGG" id="azc:AZC_1784"/>
<dbReference type="eggNOG" id="COG0215">
    <property type="taxonomic scope" value="Bacteria"/>
</dbReference>
<dbReference type="HOGENOM" id="CLU_013528_0_1_5"/>
<dbReference type="Proteomes" id="UP000000270">
    <property type="component" value="Chromosome"/>
</dbReference>
<dbReference type="GO" id="GO:0005829">
    <property type="term" value="C:cytosol"/>
    <property type="evidence" value="ECO:0007669"/>
    <property type="project" value="TreeGrafter"/>
</dbReference>
<dbReference type="GO" id="GO:0005524">
    <property type="term" value="F:ATP binding"/>
    <property type="evidence" value="ECO:0007669"/>
    <property type="project" value="UniProtKB-UniRule"/>
</dbReference>
<dbReference type="GO" id="GO:0004817">
    <property type="term" value="F:cysteine-tRNA ligase activity"/>
    <property type="evidence" value="ECO:0007669"/>
    <property type="project" value="UniProtKB-UniRule"/>
</dbReference>
<dbReference type="GO" id="GO:0008270">
    <property type="term" value="F:zinc ion binding"/>
    <property type="evidence" value="ECO:0007669"/>
    <property type="project" value="UniProtKB-UniRule"/>
</dbReference>
<dbReference type="GO" id="GO:0006423">
    <property type="term" value="P:cysteinyl-tRNA aminoacylation"/>
    <property type="evidence" value="ECO:0007669"/>
    <property type="project" value="UniProtKB-UniRule"/>
</dbReference>
<dbReference type="CDD" id="cd00672">
    <property type="entry name" value="CysRS_core"/>
    <property type="match status" value="1"/>
</dbReference>
<dbReference type="FunFam" id="3.40.50.620:FF:000068">
    <property type="entry name" value="Cysteine--tRNA ligase"/>
    <property type="match status" value="1"/>
</dbReference>
<dbReference type="Gene3D" id="1.20.120.1910">
    <property type="entry name" value="Cysteine-tRNA ligase, C-terminal anti-codon recognition domain"/>
    <property type="match status" value="1"/>
</dbReference>
<dbReference type="Gene3D" id="3.40.50.620">
    <property type="entry name" value="HUPs"/>
    <property type="match status" value="1"/>
</dbReference>
<dbReference type="HAMAP" id="MF_00041">
    <property type="entry name" value="Cys_tRNA_synth"/>
    <property type="match status" value="1"/>
</dbReference>
<dbReference type="InterPro" id="IPR015803">
    <property type="entry name" value="Cys-tRNA-ligase"/>
</dbReference>
<dbReference type="InterPro" id="IPR015273">
    <property type="entry name" value="Cys-tRNA-synt_Ia_DALR"/>
</dbReference>
<dbReference type="InterPro" id="IPR024909">
    <property type="entry name" value="Cys-tRNA/MSH_ligase"/>
</dbReference>
<dbReference type="InterPro" id="IPR056411">
    <property type="entry name" value="CysS_C"/>
</dbReference>
<dbReference type="InterPro" id="IPR014729">
    <property type="entry name" value="Rossmann-like_a/b/a_fold"/>
</dbReference>
<dbReference type="InterPro" id="IPR032678">
    <property type="entry name" value="tRNA-synt_1_cat_dom"/>
</dbReference>
<dbReference type="InterPro" id="IPR009080">
    <property type="entry name" value="tRNAsynth_Ia_anticodon-bd"/>
</dbReference>
<dbReference type="NCBIfam" id="TIGR00435">
    <property type="entry name" value="cysS"/>
    <property type="match status" value="1"/>
</dbReference>
<dbReference type="PANTHER" id="PTHR10890:SF3">
    <property type="entry name" value="CYSTEINE--TRNA LIGASE, CYTOPLASMIC"/>
    <property type="match status" value="1"/>
</dbReference>
<dbReference type="PANTHER" id="PTHR10890">
    <property type="entry name" value="CYSTEINYL-TRNA SYNTHETASE"/>
    <property type="match status" value="1"/>
</dbReference>
<dbReference type="Pfam" id="PF23493">
    <property type="entry name" value="CysS_C"/>
    <property type="match status" value="1"/>
</dbReference>
<dbReference type="Pfam" id="PF01406">
    <property type="entry name" value="tRNA-synt_1e"/>
    <property type="match status" value="1"/>
</dbReference>
<dbReference type="PRINTS" id="PR00983">
    <property type="entry name" value="TRNASYNTHCYS"/>
</dbReference>
<dbReference type="SMART" id="SM00840">
    <property type="entry name" value="DALR_2"/>
    <property type="match status" value="1"/>
</dbReference>
<dbReference type="SUPFAM" id="SSF47323">
    <property type="entry name" value="Anticodon-binding domain of a subclass of class I aminoacyl-tRNA synthetases"/>
    <property type="match status" value="1"/>
</dbReference>
<dbReference type="SUPFAM" id="SSF52374">
    <property type="entry name" value="Nucleotidylyl transferase"/>
    <property type="match status" value="1"/>
</dbReference>
<name>SYC_AZOC5</name>
<keyword id="KW-0030">Aminoacyl-tRNA synthetase</keyword>
<keyword id="KW-0067">ATP-binding</keyword>
<keyword id="KW-0963">Cytoplasm</keyword>
<keyword id="KW-0436">Ligase</keyword>
<keyword id="KW-0479">Metal-binding</keyword>
<keyword id="KW-0547">Nucleotide-binding</keyword>
<keyword id="KW-0648">Protein biosynthesis</keyword>
<keyword id="KW-1185">Reference proteome</keyword>
<keyword id="KW-0862">Zinc</keyword>
<sequence length="462" mass="52099">MELRLYNTLTRSKDAFRPLDPNLVRLYVCGPTVYDHAHIGNARPVIVFDVLFRLLRRLYGADHVRYVRNITDVDDKINARAAERSISIRELTEETYAWFRDDTAALGCLRPDVEPRATEHILEMQALIERLVASGHAYVAEEHVLFHVPSMPEYGKLSRRPLDEMLNGARVDVAPFKRDPMDFVLWKPSTEGQPGWPSPCGIATPGRPGWHIECSAMSWRHLGETFDIHGGGIDLVFPHHENEIAQSRCAFDSGSMAQVWMHNGFLLVEGEKMSKSLGNFVTIRELLTDWPGEVLRLAMLSTHYRQPINWTRQGIGFAAKTLDKWYRVIGDVEAETGEGNPFESEIADRLGDDLNSPSAITHLHHLADVAEHEDASSALKRRFKSAANLMGLLHETETEWRARQRAAVSVDPDAIAALIADRNAARKARDFATADHIREQLASQGIVLMDNKDGTTSWELTR</sequence>
<feature type="chain" id="PRO_1000071069" description="Cysteine--tRNA ligase">
    <location>
        <begin position="1"/>
        <end position="462"/>
    </location>
</feature>
<feature type="short sequence motif" description="'HIGH' region">
    <location>
        <begin position="31"/>
        <end position="41"/>
    </location>
</feature>
<feature type="short sequence motif" description="'KMSKS' region">
    <location>
        <begin position="272"/>
        <end position="276"/>
    </location>
</feature>
<feature type="binding site" evidence="1">
    <location>
        <position position="29"/>
    </location>
    <ligand>
        <name>Zn(2+)</name>
        <dbReference type="ChEBI" id="CHEBI:29105"/>
    </ligand>
</feature>
<feature type="binding site" evidence="1">
    <location>
        <position position="214"/>
    </location>
    <ligand>
        <name>Zn(2+)</name>
        <dbReference type="ChEBI" id="CHEBI:29105"/>
    </ligand>
</feature>
<feature type="binding site" evidence="1">
    <location>
        <position position="239"/>
    </location>
    <ligand>
        <name>Zn(2+)</name>
        <dbReference type="ChEBI" id="CHEBI:29105"/>
    </ligand>
</feature>
<feature type="binding site" evidence="1">
    <location>
        <position position="243"/>
    </location>
    <ligand>
        <name>Zn(2+)</name>
        <dbReference type="ChEBI" id="CHEBI:29105"/>
    </ligand>
</feature>
<feature type="binding site" evidence="1">
    <location>
        <position position="275"/>
    </location>
    <ligand>
        <name>ATP</name>
        <dbReference type="ChEBI" id="CHEBI:30616"/>
    </ligand>
</feature>
<gene>
    <name evidence="1" type="primary">cysS</name>
    <name type="ordered locus">AZC_1784</name>
</gene>
<reference key="1">
    <citation type="submission" date="2007-04" db="EMBL/GenBank/DDBJ databases">
        <title>Complete genome sequence of the nitrogen-fixing bacterium Azorhizobium caulinodans ORS571.</title>
        <authorList>
            <person name="Lee K.B."/>
            <person name="Backer P.D."/>
            <person name="Aono T."/>
            <person name="Liu C.T."/>
            <person name="Suzuki S."/>
            <person name="Suzuki T."/>
            <person name="Kaneko T."/>
            <person name="Yamada M."/>
            <person name="Tabata S."/>
            <person name="Kupfer D.M."/>
            <person name="Najar F.Z."/>
            <person name="Wiley G.B."/>
            <person name="Roe B."/>
            <person name="Binnewies T."/>
            <person name="Ussery D."/>
            <person name="Vereecke D."/>
            <person name="Gevers D."/>
            <person name="Holsters M."/>
            <person name="Oyaizu H."/>
        </authorList>
    </citation>
    <scope>NUCLEOTIDE SEQUENCE [LARGE SCALE GENOMIC DNA]</scope>
    <source>
        <strain>ATCC 43989 / DSM 5975 / JCM 20966 / LMG 6465 / NBRC 14845 / NCIMB 13405 / ORS 571</strain>
    </source>
</reference>
<comment type="catalytic activity">
    <reaction evidence="1">
        <text>tRNA(Cys) + L-cysteine + ATP = L-cysteinyl-tRNA(Cys) + AMP + diphosphate</text>
        <dbReference type="Rhea" id="RHEA:17773"/>
        <dbReference type="Rhea" id="RHEA-COMP:9661"/>
        <dbReference type="Rhea" id="RHEA-COMP:9679"/>
        <dbReference type="ChEBI" id="CHEBI:30616"/>
        <dbReference type="ChEBI" id="CHEBI:33019"/>
        <dbReference type="ChEBI" id="CHEBI:35235"/>
        <dbReference type="ChEBI" id="CHEBI:78442"/>
        <dbReference type="ChEBI" id="CHEBI:78517"/>
        <dbReference type="ChEBI" id="CHEBI:456215"/>
        <dbReference type="EC" id="6.1.1.16"/>
    </reaction>
</comment>
<comment type="cofactor">
    <cofactor evidence="1">
        <name>Zn(2+)</name>
        <dbReference type="ChEBI" id="CHEBI:29105"/>
    </cofactor>
    <text evidence="1">Binds 1 zinc ion per subunit.</text>
</comment>
<comment type="subunit">
    <text evidence="1">Monomer.</text>
</comment>
<comment type="subcellular location">
    <subcellularLocation>
        <location evidence="1">Cytoplasm</location>
    </subcellularLocation>
</comment>
<comment type="similarity">
    <text evidence="1">Belongs to the class-I aminoacyl-tRNA synthetase family.</text>
</comment>
<evidence type="ECO:0000255" key="1">
    <source>
        <dbReference type="HAMAP-Rule" id="MF_00041"/>
    </source>
</evidence>
<organism>
    <name type="scientific">Azorhizobium caulinodans (strain ATCC 43989 / DSM 5975 / JCM 20966 / LMG 6465 / NBRC 14845 / NCIMB 13405 / ORS 571)</name>
    <dbReference type="NCBI Taxonomy" id="438753"/>
    <lineage>
        <taxon>Bacteria</taxon>
        <taxon>Pseudomonadati</taxon>
        <taxon>Pseudomonadota</taxon>
        <taxon>Alphaproteobacteria</taxon>
        <taxon>Hyphomicrobiales</taxon>
        <taxon>Xanthobacteraceae</taxon>
        <taxon>Azorhizobium</taxon>
    </lineage>
</organism>